<reference key="1">
    <citation type="submission" date="2006-10" db="EMBL/GenBank/DDBJ databases">
        <authorList>
            <person name="Fleischmann R.D."/>
            <person name="Dodson R.J."/>
            <person name="Haft D.H."/>
            <person name="Merkel J.S."/>
            <person name="Nelson W.C."/>
            <person name="Fraser C.M."/>
        </authorList>
    </citation>
    <scope>NUCLEOTIDE SEQUENCE [LARGE SCALE GENOMIC DNA]</scope>
    <source>
        <strain>104</strain>
    </source>
</reference>
<protein>
    <recommendedName>
        <fullName evidence="1">3-(3-hydroxy-phenyl)propionate/3-hydroxycinnamic acid hydroxylase</fullName>
        <shortName evidence="1">3-HCI hydroxylase</shortName>
        <shortName evidence="1">3-HPP hydroxylase</shortName>
        <ecNumber evidence="1">1.14.13.127</ecNumber>
    </recommendedName>
</protein>
<proteinExistence type="inferred from homology"/>
<keyword id="KW-0058">Aromatic hydrocarbons catabolism</keyword>
<keyword id="KW-0274">FAD</keyword>
<keyword id="KW-0285">Flavoprotein</keyword>
<keyword id="KW-0520">NAD</keyword>
<keyword id="KW-0560">Oxidoreductase</keyword>
<organism>
    <name type="scientific">Mycobacterium avium (strain 104)</name>
    <dbReference type="NCBI Taxonomy" id="243243"/>
    <lineage>
        <taxon>Bacteria</taxon>
        <taxon>Bacillati</taxon>
        <taxon>Actinomycetota</taxon>
        <taxon>Actinomycetes</taxon>
        <taxon>Mycobacteriales</taxon>
        <taxon>Mycobacteriaceae</taxon>
        <taxon>Mycobacterium</taxon>
        <taxon>Mycobacterium avium complex (MAC)</taxon>
    </lineage>
</organism>
<sequence length="580" mass="63287">MIAPGPRATDHDTDVLVVGAGPVGLTLANILGLQGIRTVVVEERDTLIDYPRGVGLDDEALRTFQSIGLVERVLPHTVPNQILRFMDAKRRVLAEMAPPDARFGWPKRNGFVQPLVDAELLAGLDRFAHVQVRWGSPMTGCREDADGVNVELGADGGNVGDGGGDGHPAGLRARYVVGCDGGRSMTRRVMGVSFDGTTSSTRWLVVDIANDPLGHPNSEVGADPERPYASISIAHGIRRFEFMIHADESDEQAEDPEFLTRMLARMVPHPDRVDVIRRRVYTHHSRIAGEFRRGRLLLAGDAAHLMPVWQGQGYNSGIRDAANLGWKLAAVVSGRAGDKLLDTYDMERRKHARAMIDLSTMVGRVISPTNRRVAGARDLLVRSASIVPTLKRYVLEMRFKPMPRYEHGAVVHANPGRADSPVGTLFIQPRVDTRDQQDVLLDDVLGPWFAVLCWNNNPRKILGETAFANWKALGARFFALRPATQLRWTGHDDPDVVVVGDRRGDLKSWFDIHAESVLFLRPDRCIAGACIAQRAPDLSAALFDALTLTPRGGDPQSGTGSVLYVAQPAPESSGAVAGPA</sequence>
<evidence type="ECO:0000255" key="1">
    <source>
        <dbReference type="HAMAP-Rule" id="MF_01652"/>
    </source>
</evidence>
<comment type="function">
    <text evidence="1">Catalyzes the insertion of one atom of molecular oxygen into position 2 of the phenyl ring of 3-(3-hydroxyphenyl)propionate (3-HPP) and hydroxycinnamic acid (3HCI).</text>
</comment>
<comment type="catalytic activity">
    <reaction evidence="1">
        <text>3-(3-hydroxyphenyl)propanoate + NADH + O2 + H(+) = 3-(2,3-dihydroxyphenyl)propanoate + NAD(+) + H2O</text>
        <dbReference type="Rhea" id="RHEA:24785"/>
        <dbReference type="ChEBI" id="CHEBI:15377"/>
        <dbReference type="ChEBI" id="CHEBI:15378"/>
        <dbReference type="ChEBI" id="CHEBI:15379"/>
        <dbReference type="ChEBI" id="CHEBI:46951"/>
        <dbReference type="ChEBI" id="CHEBI:57277"/>
        <dbReference type="ChEBI" id="CHEBI:57540"/>
        <dbReference type="ChEBI" id="CHEBI:57945"/>
        <dbReference type="EC" id="1.14.13.127"/>
    </reaction>
</comment>
<comment type="catalytic activity">
    <reaction evidence="1">
        <text>(2E)-3-(3-hydroxyphenyl)prop-2-enoate + NADH + O2 + H(+) = (2E)-3-(2,3-dihydroxyphenyl)prop-2-enoate + NAD(+) + H2O</text>
        <dbReference type="Rhea" id="RHEA:27846"/>
        <dbReference type="ChEBI" id="CHEBI:15377"/>
        <dbReference type="ChEBI" id="CHEBI:15378"/>
        <dbReference type="ChEBI" id="CHEBI:15379"/>
        <dbReference type="ChEBI" id="CHEBI:47928"/>
        <dbReference type="ChEBI" id="CHEBI:57540"/>
        <dbReference type="ChEBI" id="CHEBI:57945"/>
        <dbReference type="ChEBI" id="CHEBI:58642"/>
        <dbReference type="EC" id="1.14.13.127"/>
    </reaction>
</comment>
<comment type="cofactor">
    <cofactor evidence="1">
        <name>FAD</name>
        <dbReference type="ChEBI" id="CHEBI:57692"/>
    </cofactor>
</comment>
<comment type="pathway">
    <text evidence="1">Aromatic compound metabolism; 3-phenylpropanoate degradation.</text>
</comment>
<comment type="similarity">
    <text evidence="1">Belongs to the PheA/TfdB FAD monooxygenase family.</text>
</comment>
<accession>A0QB57</accession>
<feature type="chain" id="PRO_0000337634" description="3-(3-hydroxy-phenyl)propionate/3-hydroxycinnamic acid hydroxylase">
    <location>
        <begin position="1"/>
        <end position="580"/>
    </location>
</feature>
<feature type="binding site" evidence="1">
    <location>
        <begin position="14"/>
        <end position="43"/>
    </location>
    <ligand>
        <name>FAD</name>
        <dbReference type="ChEBI" id="CHEBI:57692"/>
    </ligand>
</feature>
<feature type="binding site" evidence="1">
    <location>
        <begin position="291"/>
        <end position="301"/>
    </location>
    <ligand>
        <name>FAD</name>
        <dbReference type="ChEBI" id="CHEBI:57692"/>
    </ligand>
</feature>
<dbReference type="EC" id="1.14.13.127" evidence="1"/>
<dbReference type="EMBL" id="CP000479">
    <property type="protein sequence ID" value="ABK68919.1"/>
    <property type="molecule type" value="Genomic_DNA"/>
</dbReference>
<dbReference type="RefSeq" id="WP_011723822.1">
    <property type="nucleotide sequence ID" value="NC_008595.1"/>
</dbReference>
<dbReference type="SMR" id="A0QB57"/>
<dbReference type="KEGG" id="mav:MAV_0878"/>
<dbReference type="HOGENOM" id="CLU_009665_20_2_11"/>
<dbReference type="UniPathway" id="UPA00714"/>
<dbReference type="Proteomes" id="UP000001574">
    <property type="component" value="Chromosome"/>
</dbReference>
<dbReference type="GO" id="GO:0008688">
    <property type="term" value="F:3-(3-hydroxyphenyl)propionate hydroxylase activity"/>
    <property type="evidence" value="ECO:0007669"/>
    <property type="project" value="UniProtKB-UniRule"/>
</dbReference>
<dbReference type="GO" id="GO:0071949">
    <property type="term" value="F:FAD binding"/>
    <property type="evidence" value="ECO:0007669"/>
    <property type="project" value="InterPro"/>
</dbReference>
<dbReference type="GO" id="GO:0019622">
    <property type="term" value="P:3-(3-hydroxy)phenylpropionate catabolic process"/>
    <property type="evidence" value="ECO:0007669"/>
    <property type="project" value="UniProtKB-UniRule"/>
</dbReference>
<dbReference type="GO" id="GO:0019380">
    <property type="term" value="P:3-phenylpropionate catabolic process"/>
    <property type="evidence" value="ECO:0007669"/>
    <property type="project" value="UniProtKB-UniPathway"/>
</dbReference>
<dbReference type="Gene3D" id="3.30.70.2450">
    <property type="match status" value="1"/>
</dbReference>
<dbReference type="Gene3D" id="3.50.50.60">
    <property type="entry name" value="FAD/NAD(P)-binding domain"/>
    <property type="match status" value="1"/>
</dbReference>
<dbReference type="HAMAP" id="MF_01652">
    <property type="entry name" value="MhpA"/>
    <property type="match status" value="1"/>
</dbReference>
<dbReference type="InterPro" id="IPR023786">
    <property type="entry name" value="3-HPP/3HCI_hydroxylase"/>
</dbReference>
<dbReference type="InterPro" id="IPR002938">
    <property type="entry name" value="FAD-bd"/>
</dbReference>
<dbReference type="InterPro" id="IPR036188">
    <property type="entry name" value="FAD/NAD-bd_sf"/>
</dbReference>
<dbReference type="InterPro" id="IPR050631">
    <property type="entry name" value="PheA/TfdB_FAD_monoxygenase"/>
</dbReference>
<dbReference type="NCBIfam" id="NF004828">
    <property type="entry name" value="PRK06183.1-2"/>
    <property type="match status" value="1"/>
</dbReference>
<dbReference type="NCBIfam" id="NF004829">
    <property type="entry name" value="PRK06183.1-3"/>
    <property type="match status" value="1"/>
</dbReference>
<dbReference type="NCBIfam" id="NF004831">
    <property type="entry name" value="PRK06183.1-5"/>
    <property type="match status" value="1"/>
</dbReference>
<dbReference type="PANTHER" id="PTHR43476">
    <property type="entry name" value="3-(3-HYDROXY-PHENYL)PROPIONATE/3-HYDROXYCINNAMIC ACID HYDROXYLASE"/>
    <property type="match status" value="1"/>
</dbReference>
<dbReference type="PANTHER" id="PTHR43476:SF3">
    <property type="entry name" value="FAD-BINDING MONOOXYGENASE"/>
    <property type="match status" value="1"/>
</dbReference>
<dbReference type="Pfam" id="PF01494">
    <property type="entry name" value="FAD_binding_3"/>
    <property type="match status" value="1"/>
</dbReference>
<dbReference type="PRINTS" id="PR00420">
    <property type="entry name" value="RNGMNOXGNASE"/>
</dbReference>
<dbReference type="SUPFAM" id="SSF51905">
    <property type="entry name" value="FAD/NAD(P)-binding domain"/>
    <property type="match status" value="1"/>
</dbReference>
<gene>
    <name evidence="1" type="primary">mhpA</name>
    <name type="ordered locus">MAV_0878</name>
</gene>
<name>MHPA_MYCA1</name>